<keyword id="KW-0067">ATP-binding</keyword>
<keyword id="KW-0963">Cytoplasm</keyword>
<keyword id="KW-0235">DNA replication</keyword>
<keyword id="KW-0238">DNA-binding</keyword>
<keyword id="KW-0446">Lipid-binding</keyword>
<keyword id="KW-0547">Nucleotide-binding</keyword>
<keyword id="KW-1185">Reference proteome</keyword>
<comment type="function">
    <text evidence="1">Plays an essential role in the initiation and regulation of chromosomal replication. ATP-DnaA binds to the origin of replication (oriC) to initiate formation of the DNA replication initiation complex once per cell cycle. Binds the DnaA box (a 9 base pair repeat at the origin) and separates the double-stranded (ds)DNA. Forms a right-handed helical filament on oriC DNA; dsDNA binds to the exterior of the filament while single-stranded (ss)DNA is stabiized in the filament's interior. The ATP-DnaA-oriC complex binds and stabilizes one strand of the AT-rich DNA unwinding element (DUE), permitting loading of DNA polymerase. After initiation quickly degrades to an ADP-DnaA complex that is not apt for DNA replication. Binds acidic phospholipids.</text>
</comment>
<comment type="subunit">
    <text evidence="1">Oligomerizes as a right-handed, spiral filament on DNA at oriC.</text>
</comment>
<comment type="subcellular location">
    <subcellularLocation>
        <location evidence="1">Cytoplasm</location>
    </subcellularLocation>
</comment>
<comment type="domain">
    <text evidence="1">Domain I is involved in oligomerization and binding regulators, domain II is flexibile and of varying length in different bacteria, domain III forms the AAA+ region, while domain IV binds dsDNA.</text>
</comment>
<comment type="similarity">
    <text evidence="1">Belongs to the DnaA family.</text>
</comment>
<sequence length="453" mass="51054">MISSAEDLWHQILERLQLLLSRPTFETWIKTATVQSFDGQTLTICTPNPFARNWLQKYYLKTIADVAREIVGKPVEIELAIAQGAEHDTSIRPTSRGEVEATPPAARHRGSELNPKYVFSRYVVGPNNRMAHAACLAVAESPGREFNPLFLCGGVGLGKTHLMQAIGHYRLEIDPNAKIFYVSTEQFTNDLIAAIRKDSMQSFREHYRAVDVMLVDDIQFIEGKEYTQEEFFHTFNTLHEAGKQVVLASDRPPSQIPRLQERLCSRFSMGLIADIQPPDLETRMAILQKKAEYENIRLPREVIEYIAASYTSNIRELEGALIRAVAYISISGLPMTVENIAPVLSPTVRKIETSPEIILKVVSEALNVPISDLKGNSRRREISMARQVGMYLMRQYTGLSLPKIGEEFGGKDHTTVMYSCDKVAELQRTDPEMGSLLRQLSDRINLASRSTEP</sequence>
<organism>
    <name type="scientific">Thermosynechococcus vestitus (strain NIES-2133 / IAM M-273 / BP-1)</name>
    <dbReference type="NCBI Taxonomy" id="197221"/>
    <lineage>
        <taxon>Bacteria</taxon>
        <taxon>Bacillati</taxon>
        <taxon>Cyanobacteriota</taxon>
        <taxon>Cyanophyceae</taxon>
        <taxon>Acaryochloridales</taxon>
        <taxon>Thermosynechococcaceae</taxon>
        <taxon>Thermosynechococcus</taxon>
    </lineage>
</organism>
<proteinExistence type="inferred from homology"/>
<feature type="chain" id="PRO_0000114283" description="Chromosomal replication initiator protein DnaA">
    <location>
        <begin position="1"/>
        <end position="453"/>
    </location>
</feature>
<feature type="region of interest" description="Domain I, interacts with DnaA modulators" evidence="1">
    <location>
        <begin position="1"/>
        <end position="73"/>
    </location>
</feature>
<feature type="region of interest" description="Domain II" evidence="1">
    <location>
        <begin position="73"/>
        <end position="111"/>
    </location>
</feature>
<feature type="region of interest" description="Domain III, AAA+ region" evidence="1">
    <location>
        <begin position="112"/>
        <end position="328"/>
    </location>
</feature>
<feature type="region of interest" description="Domain IV, binds dsDNA" evidence="1">
    <location>
        <begin position="329"/>
        <end position="453"/>
    </location>
</feature>
<feature type="binding site" evidence="1">
    <location>
        <position position="156"/>
    </location>
    <ligand>
        <name>ATP</name>
        <dbReference type="ChEBI" id="CHEBI:30616"/>
    </ligand>
</feature>
<feature type="binding site" evidence="1">
    <location>
        <position position="158"/>
    </location>
    <ligand>
        <name>ATP</name>
        <dbReference type="ChEBI" id="CHEBI:30616"/>
    </ligand>
</feature>
<feature type="binding site" evidence="1">
    <location>
        <position position="159"/>
    </location>
    <ligand>
        <name>ATP</name>
        <dbReference type="ChEBI" id="CHEBI:30616"/>
    </ligand>
</feature>
<feature type="binding site" evidence="1">
    <location>
        <position position="160"/>
    </location>
    <ligand>
        <name>ATP</name>
        <dbReference type="ChEBI" id="CHEBI:30616"/>
    </ligand>
</feature>
<gene>
    <name evidence="1" type="primary">dnaA</name>
    <name type="ordered locus">tlr0603</name>
</gene>
<name>DNAA_THEVB</name>
<reference key="1">
    <citation type="journal article" date="2002" name="DNA Res.">
        <title>Complete genome structure of the thermophilic cyanobacterium Thermosynechococcus elongatus BP-1.</title>
        <authorList>
            <person name="Nakamura Y."/>
            <person name="Kaneko T."/>
            <person name="Sato S."/>
            <person name="Ikeuchi M."/>
            <person name="Katoh H."/>
            <person name="Sasamoto S."/>
            <person name="Watanabe A."/>
            <person name="Iriguchi M."/>
            <person name="Kawashima K."/>
            <person name="Kimura T."/>
            <person name="Kishida Y."/>
            <person name="Kiyokawa C."/>
            <person name="Kohara M."/>
            <person name="Matsumoto M."/>
            <person name="Matsuno A."/>
            <person name="Nakazaki N."/>
            <person name="Shimpo S."/>
            <person name="Sugimoto M."/>
            <person name="Takeuchi C."/>
            <person name="Yamada M."/>
            <person name="Tabata S."/>
        </authorList>
    </citation>
    <scope>NUCLEOTIDE SEQUENCE [LARGE SCALE GENOMIC DNA]</scope>
    <source>
        <strain>NIES-2133 / IAM M-273 / BP-1</strain>
    </source>
</reference>
<evidence type="ECO:0000255" key="1">
    <source>
        <dbReference type="HAMAP-Rule" id="MF_00377"/>
    </source>
</evidence>
<dbReference type="EMBL" id="BA000039">
    <property type="protein sequence ID" value="BAC08155.1"/>
    <property type="molecule type" value="Genomic_DNA"/>
</dbReference>
<dbReference type="RefSeq" id="NP_681393.1">
    <property type="nucleotide sequence ID" value="NC_004113.1"/>
</dbReference>
<dbReference type="RefSeq" id="WP_011056451.1">
    <property type="nucleotide sequence ID" value="NC_004113.1"/>
</dbReference>
<dbReference type="SMR" id="Q8DL93"/>
<dbReference type="STRING" id="197221.gene:10747193"/>
<dbReference type="EnsemblBacteria" id="BAC08155">
    <property type="protein sequence ID" value="BAC08155"/>
    <property type="gene ID" value="BAC08155"/>
</dbReference>
<dbReference type="KEGG" id="tel:tlr0603"/>
<dbReference type="PATRIC" id="fig|197221.4.peg.637"/>
<dbReference type="eggNOG" id="COG0593">
    <property type="taxonomic scope" value="Bacteria"/>
</dbReference>
<dbReference type="Proteomes" id="UP000000440">
    <property type="component" value="Chromosome"/>
</dbReference>
<dbReference type="GO" id="GO:0005737">
    <property type="term" value="C:cytoplasm"/>
    <property type="evidence" value="ECO:0007669"/>
    <property type="project" value="UniProtKB-SubCell"/>
</dbReference>
<dbReference type="GO" id="GO:0005886">
    <property type="term" value="C:plasma membrane"/>
    <property type="evidence" value="ECO:0007669"/>
    <property type="project" value="TreeGrafter"/>
</dbReference>
<dbReference type="GO" id="GO:0005524">
    <property type="term" value="F:ATP binding"/>
    <property type="evidence" value="ECO:0007669"/>
    <property type="project" value="UniProtKB-UniRule"/>
</dbReference>
<dbReference type="GO" id="GO:0016887">
    <property type="term" value="F:ATP hydrolysis activity"/>
    <property type="evidence" value="ECO:0007669"/>
    <property type="project" value="InterPro"/>
</dbReference>
<dbReference type="GO" id="GO:0003688">
    <property type="term" value="F:DNA replication origin binding"/>
    <property type="evidence" value="ECO:0007669"/>
    <property type="project" value="UniProtKB-UniRule"/>
</dbReference>
<dbReference type="GO" id="GO:0008289">
    <property type="term" value="F:lipid binding"/>
    <property type="evidence" value="ECO:0007669"/>
    <property type="project" value="UniProtKB-KW"/>
</dbReference>
<dbReference type="GO" id="GO:0006270">
    <property type="term" value="P:DNA replication initiation"/>
    <property type="evidence" value="ECO:0007669"/>
    <property type="project" value="UniProtKB-UniRule"/>
</dbReference>
<dbReference type="GO" id="GO:0006275">
    <property type="term" value="P:regulation of DNA replication"/>
    <property type="evidence" value="ECO:0007669"/>
    <property type="project" value="UniProtKB-UniRule"/>
</dbReference>
<dbReference type="CDD" id="cd00009">
    <property type="entry name" value="AAA"/>
    <property type="match status" value="1"/>
</dbReference>
<dbReference type="CDD" id="cd06571">
    <property type="entry name" value="Bac_DnaA_C"/>
    <property type="match status" value="1"/>
</dbReference>
<dbReference type="FunFam" id="1.10.8.60:FF:000003">
    <property type="entry name" value="Chromosomal replication initiator protein DnaA"/>
    <property type="match status" value="1"/>
</dbReference>
<dbReference type="FunFam" id="3.40.50.300:FF:000150">
    <property type="entry name" value="Chromosomal replication initiator protein DnaA"/>
    <property type="match status" value="1"/>
</dbReference>
<dbReference type="Gene3D" id="1.10.1750.10">
    <property type="match status" value="1"/>
</dbReference>
<dbReference type="Gene3D" id="1.10.8.60">
    <property type="match status" value="1"/>
</dbReference>
<dbReference type="Gene3D" id="3.30.300.180">
    <property type="match status" value="1"/>
</dbReference>
<dbReference type="Gene3D" id="3.40.50.300">
    <property type="entry name" value="P-loop containing nucleotide triphosphate hydrolases"/>
    <property type="match status" value="1"/>
</dbReference>
<dbReference type="HAMAP" id="MF_00377">
    <property type="entry name" value="DnaA_bact"/>
    <property type="match status" value="1"/>
</dbReference>
<dbReference type="InterPro" id="IPR003593">
    <property type="entry name" value="AAA+_ATPase"/>
</dbReference>
<dbReference type="InterPro" id="IPR001957">
    <property type="entry name" value="Chromosome_initiator_DnaA"/>
</dbReference>
<dbReference type="InterPro" id="IPR020591">
    <property type="entry name" value="Chromosome_initiator_DnaA-like"/>
</dbReference>
<dbReference type="InterPro" id="IPR018312">
    <property type="entry name" value="Chromosome_initiator_DnaA_CS"/>
</dbReference>
<dbReference type="InterPro" id="IPR013159">
    <property type="entry name" value="DnaA_C"/>
</dbReference>
<dbReference type="InterPro" id="IPR013317">
    <property type="entry name" value="DnaA_dom"/>
</dbReference>
<dbReference type="InterPro" id="IPR024633">
    <property type="entry name" value="DnaA_N_dom"/>
</dbReference>
<dbReference type="InterPro" id="IPR038454">
    <property type="entry name" value="DnaA_N_sf"/>
</dbReference>
<dbReference type="InterPro" id="IPR027417">
    <property type="entry name" value="P-loop_NTPase"/>
</dbReference>
<dbReference type="InterPro" id="IPR010921">
    <property type="entry name" value="Trp_repressor/repl_initiator"/>
</dbReference>
<dbReference type="NCBIfam" id="TIGR00362">
    <property type="entry name" value="DnaA"/>
    <property type="match status" value="1"/>
</dbReference>
<dbReference type="PANTHER" id="PTHR30050">
    <property type="entry name" value="CHROMOSOMAL REPLICATION INITIATOR PROTEIN DNAA"/>
    <property type="match status" value="1"/>
</dbReference>
<dbReference type="PANTHER" id="PTHR30050:SF2">
    <property type="entry name" value="CHROMOSOMAL REPLICATION INITIATOR PROTEIN DNAA"/>
    <property type="match status" value="1"/>
</dbReference>
<dbReference type="Pfam" id="PF00308">
    <property type="entry name" value="Bac_DnaA"/>
    <property type="match status" value="1"/>
</dbReference>
<dbReference type="Pfam" id="PF08299">
    <property type="entry name" value="Bac_DnaA_C"/>
    <property type="match status" value="1"/>
</dbReference>
<dbReference type="Pfam" id="PF11638">
    <property type="entry name" value="DnaA_N"/>
    <property type="match status" value="1"/>
</dbReference>
<dbReference type="PRINTS" id="PR00051">
    <property type="entry name" value="DNAA"/>
</dbReference>
<dbReference type="SMART" id="SM00382">
    <property type="entry name" value="AAA"/>
    <property type="match status" value="1"/>
</dbReference>
<dbReference type="SMART" id="SM00760">
    <property type="entry name" value="Bac_DnaA_C"/>
    <property type="match status" value="1"/>
</dbReference>
<dbReference type="SUPFAM" id="SSF52540">
    <property type="entry name" value="P-loop containing nucleoside triphosphate hydrolases"/>
    <property type="match status" value="1"/>
</dbReference>
<dbReference type="SUPFAM" id="SSF48295">
    <property type="entry name" value="TrpR-like"/>
    <property type="match status" value="1"/>
</dbReference>
<dbReference type="PROSITE" id="PS01008">
    <property type="entry name" value="DNAA"/>
    <property type="match status" value="1"/>
</dbReference>
<accession>Q8DL93</accession>
<protein>
    <recommendedName>
        <fullName evidence="1">Chromosomal replication initiator protein DnaA</fullName>
    </recommendedName>
</protein>